<gene>
    <name type="primary">sspM</name>
</gene>
<accession>P81390</accession>
<sequence>MANYQNASNRNSSNKLVAPGAQAAIDQMKFEIASEFGVNLGPDNSSSRRLG</sequence>
<protein>
    <recommendedName>
        <fullName>Protein SspM</fullName>
    </recommendedName>
</protein>
<proteinExistence type="inferred from homology"/>
<feature type="chain" id="PRO_0000196319" description="Protein SspM">
    <location>
        <begin position="1"/>
        <end position="51"/>
    </location>
</feature>
<keyword id="KW-0238">DNA-binding</keyword>
<organism>
    <name type="scientific">Mycolicibacterium phlei</name>
    <name type="common">Mycobacterium phlei</name>
    <dbReference type="NCBI Taxonomy" id="1771"/>
    <lineage>
        <taxon>Bacteria</taxon>
        <taxon>Bacillati</taxon>
        <taxon>Actinomycetota</taxon>
        <taxon>Actinomycetes</taxon>
        <taxon>Mycobacteriales</taxon>
        <taxon>Mycobacteriaceae</taxon>
        <taxon>Mycolicibacterium</taxon>
    </lineage>
</organism>
<name>SSPM_MYCPH</name>
<dbReference type="EMBL" id="M57779">
    <property type="status" value="NOT_ANNOTATED_CDS"/>
    <property type="molecule type" value="Genomic_DNA"/>
</dbReference>
<dbReference type="PIR" id="A39059">
    <property type="entry name" value="A39059"/>
</dbReference>
<dbReference type="SMR" id="P81390"/>
<dbReference type="GO" id="GO:0003690">
    <property type="term" value="F:double-stranded DNA binding"/>
    <property type="evidence" value="ECO:0007669"/>
    <property type="project" value="InterPro"/>
</dbReference>
<dbReference type="GO" id="GO:0006265">
    <property type="term" value="P:DNA topological change"/>
    <property type="evidence" value="ECO:0007669"/>
    <property type="project" value="InterPro"/>
</dbReference>
<dbReference type="Gene3D" id="6.10.10.80">
    <property type="entry name" value="Small, acid-soluble spore protein, alpha/beta type-like"/>
    <property type="match status" value="1"/>
</dbReference>
<dbReference type="InterPro" id="IPR001448">
    <property type="entry name" value="SASP_alpha/beta-type"/>
</dbReference>
<dbReference type="InterPro" id="IPR018126">
    <property type="entry name" value="SASP_alpha/beta-type_CS"/>
</dbReference>
<dbReference type="InterPro" id="IPR050847">
    <property type="entry name" value="SASP_DNA-binding"/>
</dbReference>
<dbReference type="InterPro" id="IPR038300">
    <property type="entry name" value="SASP_sf_alpha/beta"/>
</dbReference>
<dbReference type="PANTHER" id="PTHR36107">
    <property type="entry name" value="SMALL, ACID-SOLUBLE SPORE PROTEIN A"/>
    <property type="match status" value="1"/>
</dbReference>
<dbReference type="PANTHER" id="PTHR36107:SF1">
    <property type="entry name" value="SMALL, ACID-SOLUBLE SPORE PROTEIN A"/>
    <property type="match status" value="1"/>
</dbReference>
<dbReference type="Pfam" id="PF00269">
    <property type="entry name" value="SASP"/>
    <property type="match status" value="1"/>
</dbReference>
<dbReference type="PROSITE" id="PS00304">
    <property type="entry name" value="SASP_1"/>
    <property type="match status" value="1"/>
</dbReference>
<reference key="1">
    <citation type="journal article" date="1991" name="Genomics">
        <title>Nonsporulating bacterial species contain DNA sequences homologous to the Bacillus spore-specific C-protein gene.</title>
        <authorList>
            <person name="Vocero-Villeta A.M."/>
            <person name="Schilling D.M."/>
            <person name="Fliss E.R."/>
        </authorList>
    </citation>
    <scope>NUCLEOTIDE SEQUENCE [GENOMIC DNA]</scope>
</reference>
<comment type="similarity">
    <text evidence="1">Belongs to the alpha/beta-type SASP family.</text>
</comment>
<evidence type="ECO:0000305" key="1"/>